<evidence type="ECO:0000255" key="1">
    <source>
        <dbReference type="HAMAP-Rule" id="MF_00285"/>
    </source>
</evidence>
<name>KDPB_BACC2</name>
<feature type="chain" id="PRO_1000119405" description="Potassium-transporting ATPase ATP-binding subunit">
    <location>
        <begin position="1"/>
        <end position="697"/>
    </location>
</feature>
<feature type="transmembrane region" description="Helical" evidence="1">
    <location>
        <begin position="55"/>
        <end position="75"/>
    </location>
</feature>
<feature type="transmembrane region" description="Helical" evidence="1">
    <location>
        <begin position="79"/>
        <end position="99"/>
    </location>
</feature>
<feature type="transmembrane region" description="Helical" evidence="1">
    <location>
        <begin position="245"/>
        <end position="265"/>
    </location>
</feature>
<feature type="transmembrane region" description="Helical" evidence="1">
    <location>
        <begin position="271"/>
        <end position="291"/>
    </location>
</feature>
<feature type="transmembrane region" description="Helical" evidence="1">
    <location>
        <begin position="605"/>
        <end position="625"/>
    </location>
</feature>
<feature type="transmembrane region" description="Helical" evidence="1">
    <location>
        <begin position="633"/>
        <end position="653"/>
    </location>
</feature>
<feature type="transmembrane region" description="Helical" evidence="1">
    <location>
        <begin position="677"/>
        <end position="697"/>
    </location>
</feature>
<feature type="active site" description="4-aspartylphosphate intermediate" evidence="1">
    <location>
        <position position="324"/>
    </location>
</feature>
<feature type="binding site" evidence="1">
    <location>
        <position position="361"/>
    </location>
    <ligand>
        <name>ATP</name>
        <dbReference type="ChEBI" id="CHEBI:30616"/>
    </ligand>
</feature>
<feature type="binding site" evidence="1">
    <location>
        <position position="365"/>
    </location>
    <ligand>
        <name>ATP</name>
        <dbReference type="ChEBI" id="CHEBI:30616"/>
    </ligand>
</feature>
<feature type="binding site" evidence="1">
    <location>
        <begin position="393"/>
        <end position="400"/>
    </location>
    <ligand>
        <name>ATP</name>
        <dbReference type="ChEBI" id="CHEBI:30616"/>
    </ligand>
</feature>
<feature type="binding site" evidence="1">
    <location>
        <position position="412"/>
    </location>
    <ligand>
        <name>ATP</name>
        <dbReference type="ChEBI" id="CHEBI:30616"/>
    </ligand>
</feature>
<feature type="binding site" evidence="1">
    <location>
        <position position="535"/>
    </location>
    <ligand>
        <name>Mg(2+)</name>
        <dbReference type="ChEBI" id="CHEBI:18420"/>
    </ligand>
</feature>
<feature type="binding site" evidence="1">
    <location>
        <position position="539"/>
    </location>
    <ligand>
        <name>Mg(2+)</name>
        <dbReference type="ChEBI" id="CHEBI:18420"/>
    </ligand>
</feature>
<organism>
    <name type="scientific">Bacillus cereus (strain G9842)</name>
    <dbReference type="NCBI Taxonomy" id="405531"/>
    <lineage>
        <taxon>Bacteria</taxon>
        <taxon>Bacillati</taxon>
        <taxon>Bacillota</taxon>
        <taxon>Bacilli</taxon>
        <taxon>Bacillales</taxon>
        <taxon>Bacillaceae</taxon>
        <taxon>Bacillus</taxon>
        <taxon>Bacillus cereus group</taxon>
    </lineage>
</organism>
<gene>
    <name evidence="1" type="primary">kdpB</name>
    <name type="ordered locus">BCG9842_B4533</name>
</gene>
<accession>B7II09</accession>
<comment type="function">
    <text evidence="1">Part of the high-affinity ATP-driven potassium transport (or Kdp) system, which catalyzes the hydrolysis of ATP coupled with the electrogenic transport of potassium into the cytoplasm. This subunit is responsible for energy coupling to the transport system and for the release of the potassium ions to the cytoplasm.</text>
</comment>
<comment type="catalytic activity">
    <reaction evidence="1">
        <text>K(+)(out) + ATP + H2O = K(+)(in) + ADP + phosphate + H(+)</text>
        <dbReference type="Rhea" id="RHEA:16777"/>
        <dbReference type="ChEBI" id="CHEBI:15377"/>
        <dbReference type="ChEBI" id="CHEBI:15378"/>
        <dbReference type="ChEBI" id="CHEBI:29103"/>
        <dbReference type="ChEBI" id="CHEBI:30616"/>
        <dbReference type="ChEBI" id="CHEBI:43474"/>
        <dbReference type="ChEBI" id="CHEBI:456216"/>
        <dbReference type="EC" id="7.2.2.6"/>
    </reaction>
    <physiologicalReaction direction="left-to-right" evidence="1">
        <dbReference type="Rhea" id="RHEA:16778"/>
    </physiologicalReaction>
</comment>
<comment type="subunit">
    <text evidence="1">The system is composed of three essential subunits: KdpA, KdpB and KdpC.</text>
</comment>
<comment type="subcellular location">
    <subcellularLocation>
        <location evidence="1">Cell membrane</location>
        <topology evidence="1">Multi-pass membrane protein</topology>
    </subcellularLocation>
</comment>
<comment type="similarity">
    <text evidence="1">Belongs to the cation transport ATPase (P-type) (TC 3.A.3) family. Type IA subfamily.</text>
</comment>
<keyword id="KW-0067">ATP-binding</keyword>
<keyword id="KW-1003">Cell membrane</keyword>
<keyword id="KW-0406">Ion transport</keyword>
<keyword id="KW-0460">Magnesium</keyword>
<keyword id="KW-0472">Membrane</keyword>
<keyword id="KW-0479">Metal-binding</keyword>
<keyword id="KW-0547">Nucleotide-binding</keyword>
<keyword id="KW-0597">Phosphoprotein</keyword>
<keyword id="KW-0630">Potassium</keyword>
<keyword id="KW-0633">Potassium transport</keyword>
<keyword id="KW-1278">Translocase</keyword>
<keyword id="KW-0812">Transmembrane</keyword>
<keyword id="KW-1133">Transmembrane helix</keyword>
<keyword id="KW-0813">Transport</keyword>
<protein>
    <recommendedName>
        <fullName evidence="1">Potassium-transporting ATPase ATP-binding subunit</fullName>
        <ecNumber evidence="1">7.2.2.6</ecNumber>
    </recommendedName>
    <alternativeName>
        <fullName evidence="1">ATP phosphohydrolase [potassium-transporting] B chain</fullName>
    </alternativeName>
    <alternativeName>
        <fullName evidence="1">Potassium-binding and translocating subunit B</fullName>
    </alternativeName>
    <alternativeName>
        <fullName evidence="1">Potassium-translocating ATPase B chain</fullName>
    </alternativeName>
</protein>
<sequence length="697" mass="74429">MMRPVVVKEKQLNKSQIHAVEDEVRQAKTMDRDIVTHAMKQSVAKLNPKVMIKNPIMFVVEIGFIITFILSFLPSSSSSIPGWFNITVSLILLFTVLFANFAEALAEGRGKAQADSLKQSKKDVFANVVKENGDIVQVSATDLRKGDVVIVKQGEMIPNDGEVIKGLASVDESAITGESAPVIKEAGGDFCSVTGGTMVVSDEITIVITSNPGESFIDKMISLVEGAARQKTPNEIALNTVLTSLTLIFLIVVVTLPIFTNYLGFQIDTAVLVALLVCLIPTTIGGLLSAIGIAGMDRVTKFNVLAMSGKAVEAAGDINTIILDKTGTITFGNRMAHTLLPVGNETIEQVGKWAAISSVLDETPEGRSVIEYVQGKSISYNRELAEQGEFVPFKAETRMSGVDLQDGTKVRKGAVGAVIEWVESQGGTIPKDVNQKADLISKEGGTPLVVAVDNRIYGLIYLKDTVKPGMRERFEQLRQMGIKTVMCTGDNPLTAATIAKEAGVDEFVAECKPEDKIAVIKAEQDKGKLVAMTGDGTNDAPALAQADVGLAMNSGTTAAKEAANMIDLDSNPTKIIEVVGIGKQLLMTRGALTTFSIANDIAKYFAIIPAMFTLAIPQMEALNIMKLTSPLSAILSALIFNAVIIPLLIPLAMKGIAYKPMSSNALLSRNLLIYGLGGVIVPFIGIKVIDIIVGLFI</sequence>
<proteinExistence type="inferred from homology"/>
<dbReference type="EC" id="7.2.2.6" evidence="1"/>
<dbReference type="EMBL" id="CP001186">
    <property type="protein sequence ID" value="ACK97081.1"/>
    <property type="molecule type" value="Genomic_DNA"/>
</dbReference>
<dbReference type="SMR" id="B7II09"/>
<dbReference type="KEGG" id="bcg:BCG9842_B4533"/>
<dbReference type="HOGENOM" id="CLU_025728_2_0_9"/>
<dbReference type="Proteomes" id="UP000006744">
    <property type="component" value="Chromosome"/>
</dbReference>
<dbReference type="GO" id="GO:0005886">
    <property type="term" value="C:plasma membrane"/>
    <property type="evidence" value="ECO:0007669"/>
    <property type="project" value="UniProtKB-SubCell"/>
</dbReference>
<dbReference type="GO" id="GO:0005524">
    <property type="term" value="F:ATP binding"/>
    <property type="evidence" value="ECO:0007669"/>
    <property type="project" value="UniProtKB-UniRule"/>
</dbReference>
<dbReference type="GO" id="GO:0016887">
    <property type="term" value="F:ATP hydrolysis activity"/>
    <property type="evidence" value="ECO:0007669"/>
    <property type="project" value="InterPro"/>
</dbReference>
<dbReference type="GO" id="GO:0000287">
    <property type="term" value="F:magnesium ion binding"/>
    <property type="evidence" value="ECO:0007669"/>
    <property type="project" value="UniProtKB-UniRule"/>
</dbReference>
<dbReference type="GO" id="GO:0008556">
    <property type="term" value="F:P-type potassium transmembrane transporter activity"/>
    <property type="evidence" value="ECO:0007669"/>
    <property type="project" value="UniProtKB-UniRule"/>
</dbReference>
<dbReference type="CDD" id="cd02078">
    <property type="entry name" value="P-type_ATPase_K"/>
    <property type="match status" value="1"/>
</dbReference>
<dbReference type="FunFam" id="2.70.150.10:FF:000010">
    <property type="entry name" value="Potassium-transporting ATPase ATP-binding subunit"/>
    <property type="match status" value="1"/>
</dbReference>
<dbReference type="FunFam" id="3.40.1110.10:FF:000007">
    <property type="entry name" value="Potassium-transporting ATPase ATP-binding subunit"/>
    <property type="match status" value="1"/>
</dbReference>
<dbReference type="Gene3D" id="3.40.1110.10">
    <property type="entry name" value="Calcium-transporting ATPase, cytoplasmic domain N"/>
    <property type="match status" value="1"/>
</dbReference>
<dbReference type="Gene3D" id="2.70.150.10">
    <property type="entry name" value="Calcium-transporting ATPase, cytoplasmic transduction domain A"/>
    <property type="match status" value="1"/>
</dbReference>
<dbReference type="Gene3D" id="3.40.50.1000">
    <property type="entry name" value="HAD superfamily/HAD-like"/>
    <property type="match status" value="1"/>
</dbReference>
<dbReference type="HAMAP" id="MF_00285">
    <property type="entry name" value="KdpB"/>
    <property type="match status" value="1"/>
</dbReference>
<dbReference type="InterPro" id="IPR023299">
    <property type="entry name" value="ATPase_P-typ_cyto_dom_N"/>
</dbReference>
<dbReference type="InterPro" id="IPR018303">
    <property type="entry name" value="ATPase_P-typ_P_site"/>
</dbReference>
<dbReference type="InterPro" id="IPR023298">
    <property type="entry name" value="ATPase_P-typ_TM_dom_sf"/>
</dbReference>
<dbReference type="InterPro" id="IPR008250">
    <property type="entry name" value="ATPase_P-typ_transduc_dom_A_sf"/>
</dbReference>
<dbReference type="InterPro" id="IPR036412">
    <property type="entry name" value="HAD-like_sf"/>
</dbReference>
<dbReference type="InterPro" id="IPR023214">
    <property type="entry name" value="HAD_sf"/>
</dbReference>
<dbReference type="InterPro" id="IPR006391">
    <property type="entry name" value="P-type_ATPase_bsu_IA"/>
</dbReference>
<dbReference type="InterPro" id="IPR001757">
    <property type="entry name" value="P_typ_ATPase"/>
</dbReference>
<dbReference type="InterPro" id="IPR044492">
    <property type="entry name" value="P_typ_ATPase_HD_dom"/>
</dbReference>
<dbReference type="NCBIfam" id="TIGR01494">
    <property type="entry name" value="ATPase_P-type"/>
    <property type="match status" value="2"/>
</dbReference>
<dbReference type="NCBIfam" id="TIGR01497">
    <property type="entry name" value="kdpB"/>
    <property type="match status" value="1"/>
</dbReference>
<dbReference type="PANTHER" id="PTHR43743">
    <property type="entry name" value="POTASSIUM-TRANSPORTING ATPASE ATP-BINDING SUBUNIT"/>
    <property type="match status" value="1"/>
</dbReference>
<dbReference type="PANTHER" id="PTHR43743:SF1">
    <property type="entry name" value="POTASSIUM-TRANSPORTING ATPASE ATP-BINDING SUBUNIT"/>
    <property type="match status" value="1"/>
</dbReference>
<dbReference type="Pfam" id="PF00122">
    <property type="entry name" value="E1-E2_ATPase"/>
    <property type="match status" value="1"/>
</dbReference>
<dbReference type="Pfam" id="PF00702">
    <property type="entry name" value="Hydrolase"/>
    <property type="match status" value="1"/>
</dbReference>
<dbReference type="PRINTS" id="PR00119">
    <property type="entry name" value="CATATPASE"/>
</dbReference>
<dbReference type="SFLD" id="SFLDS00003">
    <property type="entry name" value="Haloacid_Dehalogenase"/>
    <property type="match status" value="1"/>
</dbReference>
<dbReference type="SFLD" id="SFLDF00027">
    <property type="entry name" value="p-type_atpase"/>
    <property type="match status" value="1"/>
</dbReference>
<dbReference type="SUPFAM" id="SSF81653">
    <property type="entry name" value="Calcium ATPase, transduction domain A"/>
    <property type="match status" value="1"/>
</dbReference>
<dbReference type="SUPFAM" id="SSF81665">
    <property type="entry name" value="Calcium ATPase, transmembrane domain M"/>
    <property type="match status" value="1"/>
</dbReference>
<dbReference type="SUPFAM" id="SSF56784">
    <property type="entry name" value="HAD-like"/>
    <property type="match status" value="1"/>
</dbReference>
<dbReference type="PROSITE" id="PS00154">
    <property type="entry name" value="ATPASE_E1_E2"/>
    <property type="match status" value="1"/>
</dbReference>
<reference key="1">
    <citation type="submission" date="2008-10" db="EMBL/GenBank/DDBJ databases">
        <title>Genome sequence of Bacillus cereus G9842.</title>
        <authorList>
            <person name="Dodson R.J."/>
            <person name="Durkin A.S."/>
            <person name="Rosovitz M.J."/>
            <person name="Rasko D.A."/>
            <person name="Hoffmaster A."/>
            <person name="Ravel J."/>
            <person name="Sutton G."/>
        </authorList>
    </citation>
    <scope>NUCLEOTIDE SEQUENCE [LARGE SCALE GENOMIC DNA]</scope>
    <source>
        <strain>G9842</strain>
    </source>
</reference>